<evidence type="ECO:0000255" key="1">
    <source>
        <dbReference type="HAMAP-Rule" id="MF_01852"/>
    </source>
</evidence>
<proteinExistence type="inferred from homology"/>
<gene>
    <name evidence="1" type="primary">tsaC</name>
    <name type="synonym">rimN</name>
    <name type="ordered locus">ABAYE3708</name>
</gene>
<sequence length="189" mass="20786">MITTSVTEAAECLQQGQVLAYPTEAVWGLGCDPFNEQAFQKILELKQRPIEKGVILLAGHISQVEHLLTSLPQTTQQEIIDCWTNHQPSERATTWLLPADQHIPSWIKGEHPLVAVRVTTHPLCVALCNAFHGFIVSTSANPSGQEPAHSLQDACQYFGSQLNYLNGDLGQSQQPSRIINALTGEVIRP</sequence>
<feature type="chain" id="PRO_0000352888" description="Threonylcarbamoyl-AMP synthase">
    <location>
        <begin position="1"/>
        <end position="189"/>
    </location>
</feature>
<feature type="domain" description="YrdC-like" evidence="1">
    <location>
        <begin position="3"/>
        <end position="189"/>
    </location>
</feature>
<organism>
    <name type="scientific">Acinetobacter baumannii (strain AYE)</name>
    <dbReference type="NCBI Taxonomy" id="509173"/>
    <lineage>
        <taxon>Bacteria</taxon>
        <taxon>Pseudomonadati</taxon>
        <taxon>Pseudomonadota</taxon>
        <taxon>Gammaproteobacteria</taxon>
        <taxon>Moraxellales</taxon>
        <taxon>Moraxellaceae</taxon>
        <taxon>Acinetobacter</taxon>
        <taxon>Acinetobacter calcoaceticus/baumannii complex</taxon>
    </lineage>
</organism>
<reference key="1">
    <citation type="journal article" date="2008" name="PLoS ONE">
        <title>Comparative analysis of Acinetobacters: three genomes for three lifestyles.</title>
        <authorList>
            <person name="Vallenet D."/>
            <person name="Nordmann P."/>
            <person name="Barbe V."/>
            <person name="Poirel L."/>
            <person name="Mangenot S."/>
            <person name="Bataille E."/>
            <person name="Dossat C."/>
            <person name="Gas S."/>
            <person name="Kreimeyer A."/>
            <person name="Lenoble P."/>
            <person name="Oztas S."/>
            <person name="Poulain J."/>
            <person name="Segurens B."/>
            <person name="Robert C."/>
            <person name="Abergel C."/>
            <person name="Claverie J.-M."/>
            <person name="Raoult D."/>
            <person name="Medigue C."/>
            <person name="Weissenbach J."/>
            <person name="Cruveiller S."/>
        </authorList>
    </citation>
    <scope>NUCLEOTIDE SEQUENCE [LARGE SCALE GENOMIC DNA]</scope>
    <source>
        <strain>AYE</strain>
    </source>
</reference>
<keyword id="KW-0067">ATP-binding</keyword>
<keyword id="KW-0963">Cytoplasm</keyword>
<keyword id="KW-0547">Nucleotide-binding</keyword>
<keyword id="KW-0548">Nucleotidyltransferase</keyword>
<keyword id="KW-0808">Transferase</keyword>
<keyword id="KW-0819">tRNA processing</keyword>
<accession>B0VCB7</accession>
<protein>
    <recommendedName>
        <fullName evidence="1">Threonylcarbamoyl-AMP synthase</fullName>
        <shortName evidence="1">TC-AMP synthase</shortName>
        <ecNumber evidence="1">2.7.7.87</ecNumber>
    </recommendedName>
    <alternativeName>
        <fullName evidence="1">L-threonylcarbamoyladenylate synthase</fullName>
    </alternativeName>
    <alternativeName>
        <fullName evidence="1">t(6)A37 threonylcarbamoyladenosine biosynthesis protein TsaC</fullName>
    </alternativeName>
    <alternativeName>
        <fullName evidence="1">tRNA threonylcarbamoyladenosine biosynthesis protein TsaC</fullName>
    </alternativeName>
</protein>
<comment type="function">
    <text evidence="1">Required for the formation of a threonylcarbamoyl group on adenosine at position 37 (t(6)A37) in tRNAs that read codons beginning with adenine. Catalyzes the conversion of L-threonine, HCO(3)(-)/CO(2) and ATP to give threonylcarbamoyl-AMP (TC-AMP) as the acyladenylate intermediate, with the release of diphosphate.</text>
</comment>
<comment type="catalytic activity">
    <reaction evidence="1">
        <text>L-threonine + hydrogencarbonate + ATP = L-threonylcarbamoyladenylate + diphosphate + H2O</text>
        <dbReference type="Rhea" id="RHEA:36407"/>
        <dbReference type="ChEBI" id="CHEBI:15377"/>
        <dbReference type="ChEBI" id="CHEBI:17544"/>
        <dbReference type="ChEBI" id="CHEBI:30616"/>
        <dbReference type="ChEBI" id="CHEBI:33019"/>
        <dbReference type="ChEBI" id="CHEBI:57926"/>
        <dbReference type="ChEBI" id="CHEBI:73682"/>
        <dbReference type="EC" id="2.7.7.87"/>
    </reaction>
</comment>
<comment type="subcellular location">
    <subcellularLocation>
        <location evidence="1">Cytoplasm</location>
    </subcellularLocation>
</comment>
<comment type="similarity">
    <text evidence="1">Belongs to the SUA5 family. TsaC subfamily.</text>
</comment>
<dbReference type="EC" id="2.7.7.87" evidence="1"/>
<dbReference type="EMBL" id="CU459141">
    <property type="protein sequence ID" value="CAM88472.1"/>
    <property type="molecule type" value="Genomic_DNA"/>
</dbReference>
<dbReference type="RefSeq" id="WP_000633612.1">
    <property type="nucleotide sequence ID" value="NZ_JBDGFB010000006.1"/>
</dbReference>
<dbReference type="SMR" id="B0VCB7"/>
<dbReference type="EnsemblBacteria" id="CAM88472">
    <property type="protein sequence ID" value="CAM88472"/>
    <property type="gene ID" value="ABAYE3708"/>
</dbReference>
<dbReference type="KEGG" id="aby:ABAYE3708"/>
<dbReference type="HOGENOM" id="CLU_031397_6_0_6"/>
<dbReference type="GO" id="GO:0005737">
    <property type="term" value="C:cytoplasm"/>
    <property type="evidence" value="ECO:0007669"/>
    <property type="project" value="UniProtKB-SubCell"/>
</dbReference>
<dbReference type="GO" id="GO:0005524">
    <property type="term" value="F:ATP binding"/>
    <property type="evidence" value="ECO:0007669"/>
    <property type="project" value="UniProtKB-UniRule"/>
</dbReference>
<dbReference type="GO" id="GO:0003725">
    <property type="term" value="F:double-stranded RNA binding"/>
    <property type="evidence" value="ECO:0007669"/>
    <property type="project" value="InterPro"/>
</dbReference>
<dbReference type="GO" id="GO:0061710">
    <property type="term" value="F:L-threonylcarbamoyladenylate synthase"/>
    <property type="evidence" value="ECO:0007669"/>
    <property type="project" value="UniProtKB-EC"/>
</dbReference>
<dbReference type="GO" id="GO:0000049">
    <property type="term" value="F:tRNA binding"/>
    <property type="evidence" value="ECO:0007669"/>
    <property type="project" value="TreeGrafter"/>
</dbReference>
<dbReference type="GO" id="GO:0006450">
    <property type="term" value="P:regulation of translational fidelity"/>
    <property type="evidence" value="ECO:0007669"/>
    <property type="project" value="TreeGrafter"/>
</dbReference>
<dbReference type="GO" id="GO:0002949">
    <property type="term" value="P:tRNA threonylcarbamoyladenosine modification"/>
    <property type="evidence" value="ECO:0007669"/>
    <property type="project" value="UniProtKB-UniRule"/>
</dbReference>
<dbReference type="Gene3D" id="3.90.870.10">
    <property type="entry name" value="DHBP synthase"/>
    <property type="match status" value="1"/>
</dbReference>
<dbReference type="HAMAP" id="MF_01852">
    <property type="entry name" value="TsaC"/>
    <property type="match status" value="1"/>
</dbReference>
<dbReference type="InterPro" id="IPR017945">
    <property type="entry name" value="DHBP_synth_RibB-like_a/b_dom"/>
</dbReference>
<dbReference type="InterPro" id="IPR006070">
    <property type="entry name" value="Sua5-like_dom"/>
</dbReference>
<dbReference type="InterPro" id="IPR023535">
    <property type="entry name" value="TC-AMP_synthase"/>
</dbReference>
<dbReference type="InterPro" id="IPR050156">
    <property type="entry name" value="TC-AMP_synthase_SUA5"/>
</dbReference>
<dbReference type="PANTHER" id="PTHR17490">
    <property type="entry name" value="SUA5"/>
    <property type="match status" value="1"/>
</dbReference>
<dbReference type="PANTHER" id="PTHR17490:SF18">
    <property type="entry name" value="THREONYLCARBAMOYL-AMP SYNTHASE"/>
    <property type="match status" value="1"/>
</dbReference>
<dbReference type="Pfam" id="PF01300">
    <property type="entry name" value="Sua5_yciO_yrdC"/>
    <property type="match status" value="1"/>
</dbReference>
<dbReference type="SUPFAM" id="SSF55821">
    <property type="entry name" value="YrdC/RibB"/>
    <property type="match status" value="1"/>
</dbReference>
<dbReference type="PROSITE" id="PS51163">
    <property type="entry name" value="YRDC"/>
    <property type="match status" value="1"/>
</dbReference>
<name>TSAC_ACIBY</name>